<evidence type="ECO:0000250" key="1"/>
<evidence type="ECO:0000305" key="2"/>
<dbReference type="EC" id="1.1.1.44"/>
<dbReference type="EMBL" id="AE001363">
    <property type="protein sequence ID" value="AAD18504.1"/>
    <property type="molecule type" value="Genomic_DNA"/>
</dbReference>
<dbReference type="EMBL" id="AE002161">
    <property type="protein sequence ID" value="AAF38243.1"/>
    <property type="molecule type" value="Genomic_DNA"/>
</dbReference>
<dbReference type="EMBL" id="BA000008">
    <property type="protein sequence ID" value="BAA98568.1"/>
    <property type="molecule type" value="Genomic_DNA"/>
</dbReference>
<dbReference type="EMBL" id="AE009440">
    <property type="protein sequence ID" value="AAP98300.1"/>
    <property type="molecule type" value="Genomic_DNA"/>
</dbReference>
<dbReference type="PIR" id="C72088">
    <property type="entry name" value="C72088"/>
</dbReference>
<dbReference type="PIR" id="F86535">
    <property type="entry name" value="F86535"/>
</dbReference>
<dbReference type="RefSeq" id="NP_224560.1">
    <property type="nucleotide sequence ID" value="NC_000922.1"/>
</dbReference>
<dbReference type="RefSeq" id="WP_010883003.1">
    <property type="nucleotide sequence ID" value="NZ_LN847257.1"/>
</dbReference>
<dbReference type="SMR" id="Q9Z8I3"/>
<dbReference type="STRING" id="406984.CPK_ORF00868"/>
<dbReference type="GeneID" id="45050405"/>
<dbReference type="KEGG" id="cpa:CP_0398"/>
<dbReference type="KEGG" id="cpj:gnd"/>
<dbReference type="KEGG" id="cpn:CPn_0360"/>
<dbReference type="KEGG" id="cpt:CpB0369"/>
<dbReference type="PATRIC" id="fig|115713.3.peg.398"/>
<dbReference type="eggNOG" id="COG0362">
    <property type="taxonomic scope" value="Bacteria"/>
</dbReference>
<dbReference type="HOGENOM" id="CLU_024540_4_2_0"/>
<dbReference type="OrthoDB" id="9804542at2"/>
<dbReference type="UniPathway" id="UPA00115">
    <property type="reaction ID" value="UER00410"/>
</dbReference>
<dbReference type="Proteomes" id="UP000000583">
    <property type="component" value="Chromosome"/>
</dbReference>
<dbReference type="Proteomes" id="UP000000801">
    <property type="component" value="Chromosome"/>
</dbReference>
<dbReference type="GO" id="GO:0050661">
    <property type="term" value="F:NADP binding"/>
    <property type="evidence" value="ECO:0007669"/>
    <property type="project" value="InterPro"/>
</dbReference>
<dbReference type="GO" id="GO:0004616">
    <property type="term" value="F:phosphogluconate dehydrogenase (decarboxylating) activity"/>
    <property type="evidence" value="ECO:0007669"/>
    <property type="project" value="UniProtKB-EC"/>
</dbReference>
<dbReference type="GO" id="GO:0019521">
    <property type="term" value="P:D-gluconate metabolic process"/>
    <property type="evidence" value="ECO:0007669"/>
    <property type="project" value="UniProtKB-KW"/>
</dbReference>
<dbReference type="GO" id="GO:0016054">
    <property type="term" value="P:organic acid catabolic process"/>
    <property type="evidence" value="ECO:0007669"/>
    <property type="project" value="UniProtKB-ARBA"/>
</dbReference>
<dbReference type="GO" id="GO:0006098">
    <property type="term" value="P:pentose-phosphate shunt"/>
    <property type="evidence" value="ECO:0007669"/>
    <property type="project" value="UniProtKB-UniPathway"/>
</dbReference>
<dbReference type="FunFam" id="1.10.1040.10:FF:000002">
    <property type="entry name" value="6-phosphogluconate dehydrogenase, decarboxylating"/>
    <property type="match status" value="1"/>
</dbReference>
<dbReference type="FunFam" id="3.40.50.720:FF:000007">
    <property type="entry name" value="6-phosphogluconate dehydrogenase, decarboxylating"/>
    <property type="match status" value="1"/>
</dbReference>
<dbReference type="Gene3D" id="1.20.5.320">
    <property type="entry name" value="6-Phosphogluconate Dehydrogenase, domain 3"/>
    <property type="match status" value="1"/>
</dbReference>
<dbReference type="Gene3D" id="1.10.1040.10">
    <property type="entry name" value="N-(1-d-carboxylethyl)-l-norvaline Dehydrogenase, domain 2"/>
    <property type="match status" value="1"/>
</dbReference>
<dbReference type="Gene3D" id="3.40.50.720">
    <property type="entry name" value="NAD(P)-binding Rossmann-like Domain"/>
    <property type="match status" value="1"/>
</dbReference>
<dbReference type="InterPro" id="IPR008927">
    <property type="entry name" value="6-PGluconate_DH-like_C_sf"/>
</dbReference>
<dbReference type="InterPro" id="IPR013328">
    <property type="entry name" value="6PGD_dom2"/>
</dbReference>
<dbReference type="InterPro" id="IPR006114">
    <property type="entry name" value="6PGDH_C"/>
</dbReference>
<dbReference type="InterPro" id="IPR006113">
    <property type="entry name" value="6PGDH_Gnd/GntZ"/>
</dbReference>
<dbReference type="InterPro" id="IPR006115">
    <property type="entry name" value="6PGDH_NADP-bd"/>
</dbReference>
<dbReference type="InterPro" id="IPR006184">
    <property type="entry name" value="6PGdom_BS"/>
</dbReference>
<dbReference type="InterPro" id="IPR036291">
    <property type="entry name" value="NAD(P)-bd_dom_sf"/>
</dbReference>
<dbReference type="InterPro" id="IPR006183">
    <property type="entry name" value="Pgluconate_DH"/>
</dbReference>
<dbReference type="NCBIfam" id="TIGR00873">
    <property type="entry name" value="gnd"/>
    <property type="match status" value="1"/>
</dbReference>
<dbReference type="NCBIfam" id="NF006765">
    <property type="entry name" value="PRK09287.1"/>
    <property type="match status" value="1"/>
</dbReference>
<dbReference type="PANTHER" id="PTHR11811">
    <property type="entry name" value="6-PHOSPHOGLUCONATE DEHYDROGENASE"/>
    <property type="match status" value="1"/>
</dbReference>
<dbReference type="Pfam" id="PF00393">
    <property type="entry name" value="6PGD"/>
    <property type="match status" value="1"/>
</dbReference>
<dbReference type="Pfam" id="PF03446">
    <property type="entry name" value="NAD_binding_2"/>
    <property type="match status" value="1"/>
</dbReference>
<dbReference type="PIRSF" id="PIRSF000109">
    <property type="entry name" value="6PGD"/>
    <property type="match status" value="1"/>
</dbReference>
<dbReference type="PRINTS" id="PR00076">
    <property type="entry name" value="6PGDHDRGNASE"/>
</dbReference>
<dbReference type="SMART" id="SM01350">
    <property type="entry name" value="6PGD"/>
    <property type="match status" value="1"/>
</dbReference>
<dbReference type="SUPFAM" id="SSF48179">
    <property type="entry name" value="6-phosphogluconate dehydrogenase C-terminal domain-like"/>
    <property type="match status" value="1"/>
</dbReference>
<dbReference type="SUPFAM" id="SSF51735">
    <property type="entry name" value="NAD(P)-binding Rossmann-fold domains"/>
    <property type="match status" value="1"/>
</dbReference>
<dbReference type="PROSITE" id="PS00461">
    <property type="entry name" value="6PGD"/>
    <property type="match status" value="1"/>
</dbReference>
<reference key="1">
    <citation type="journal article" date="1999" name="Nat. Genet.">
        <title>Comparative genomes of Chlamydia pneumoniae and C. trachomatis.</title>
        <authorList>
            <person name="Kalman S."/>
            <person name="Mitchell W.P."/>
            <person name="Marathe R."/>
            <person name="Lammel C.J."/>
            <person name="Fan J."/>
            <person name="Hyman R.W."/>
            <person name="Olinger L."/>
            <person name="Grimwood J."/>
            <person name="Davis R.W."/>
            <person name="Stephens R.S."/>
        </authorList>
    </citation>
    <scope>NUCLEOTIDE SEQUENCE [LARGE SCALE GENOMIC DNA]</scope>
    <source>
        <strain>CWL029</strain>
    </source>
</reference>
<reference key="2">
    <citation type="journal article" date="2000" name="Nucleic Acids Res.">
        <title>Genome sequences of Chlamydia trachomatis MoPn and Chlamydia pneumoniae AR39.</title>
        <authorList>
            <person name="Read T.D."/>
            <person name="Brunham R.C."/>
            <person name="Shen C."/>
            <person name="Gill S.R."/>
            <person name="Heidelberg J.F."/>
            <person name="White O."/>
            <person name="Hickey E.K."/>
            <person name="Peterson J.D."/>
            <person name="Utterback T.R."/>
            <person name="Berry K.J."/>
            <person name="Bass S."/>
            <person name="Linher K.D."/>
            <person name="Weidman J.F."/>
            <person name="Khouri H.M."/>
            <person name="Craven B."/>
            <person name="Bowman C."/>
            <person name="Dodson R.J."/>
            <person name="Gwinn M.L."/>
            <person name="Nelson W.C."/>
            <person name="DeBoy R.T."/>
            <person name="Kolonay J.F."/>
            <person name="McClarty G."/>
            <person name="Salzberg S.L."/>
            <person name="Eisen J.A."/>
            <person name="Fraser C.M."/>
        </authorList>
    </citation>
    <scope>NUCLEOTIDE SEQUENCE [LARGE SCALE GENOMIC DNA]</scope>
    <source>
        <strain>AR39</strain>
    </source>
</reference>
<reference key="3">
    <citation type="journal article" date="2000" name="Nucleic Acids Res.">
        <title>Comparison of whole genome sequences of Chlamydia pneumoniae J138 from Japan and CWL029 from USA.</title>
        <authorList>
            <person name="Shirai M."/>
            <person name="Hirakawa H."/>
            <person name="Kimoto M."/>
            <person name="Tabuchi M."/>
            <person name="Kishi F."/>
            <person name="Ouchi K."/>
            <person name="Shiba T."/>
            <person name="Ishii K."/>
            <person name="Hattori M."/>
            <person name="Kuhara S."/>
            <person name="Nakazawa T."/>
        </authorList>
    </citation>
    <scope>NUCLEOTIDE SEQUENCE [LARGE SCALE GENOMIC DNA]</scope>
    <source>
        <strain>J138</strain>
    </source>
</reference>
<reference key="4">
    <citation type="submission" date="2002-05" db="EMBL/GenBank/DDBJ databases">
        <title>The genome sequence of Chlamydia pneumoniae TW183 and comparison with other Chlamydia strains based on whole genome sequence analysis.</title>
        <authorList>
            <person name="Geng M.M."/>
            <person name="Schuhmacher A."/>
            <person name="Muehldorfer I."/>
            <person name="Bensch K.W."/>
            <person name="Schaefer K.P."/>
            <person name="Schneider S."/>
            <person name="Pohl T."/>
            <person name="Essig A."/>
            <person name="Marre R."/>
            <person name="Melchers K."/>
        </authorList>
    </citation>
    <scope>NUCLEOTIDE SEQUENCE [LARGE SCALE GENOMIC DNA]</scope>
    <source>
        <strain>TW-183</strain>
    </source>
</reference>
<keyword id="KW-0311">Gluconate utilization</keyword>
<keyword id="KW-0521">NADP</keyword>
<keyword id="KW-0560">Oxidoreductase</keyword>
<keyword id="KW-0570">Pentose shunt</keyword>
<accession>Q9Z8I3</accession>
<accession>Q9JQC1</accession>
<sequence>MQTNIGLIGLAVMGKNLVLNMIDHGFSVSVYNRTPEKTRDFLKEYPNHRELVGFESLEDFVNSLERPRKIMLMIQAGKPVDQSIHALLPFLEPGDVIIDGGNSYFKDSERRCKELQEKGILFLGVGISGGEEGARHGPSIMPGGNPEAWPLVAPIFQSIAAKVQGRPCCSWVGTGGAGHYVKAVHNGIEYGDIQLICEAYGILRDFLKLSATAVATILKEWNTLELESYLIRIASEVLALKDPEGIPVIDTILDVVGQKGTGKWTAIDALNSGVPLSLIIGAVLARFLSSWKEIREQAARNYPGTPLIFEMPHDPSVFIQDVFHALYASKIISYAQGFMLLGEASKEYNWGLDLGEIALMWRGGCIIQSAFLDVIHKGFAANPENTSLIFQEYFRGALRHAEMGWRRTVVTAIGAGLPIPCLAAAITFYDGYRTASSSMSLAQGLRDYFGAHTYERNDRPRGEFYHTDWVHTKTTERVK</sequence>
<organism>
    <name type="scientific">Chlamydia pneumoniae</name>
    <name type="common">Chlamydophila pneumoniae</name>
    <dbReference type="NCBI Taxonomy" id="83558"/>
    <lineage>
        <taxon>Bacteria</taxon>
        <taxon>Pseudomonadati</taxon>
        <taxon>Chlamydiota</taxon>
        <taxon>Chlamydiia</taxon>
        <taxon>Chlamydiales</taxon>
        <taxon>Chlamydiaceae</taxon>
        <taxon>Chlamydia/Chlamydophila group</taxon>
        <taxon>Chlamydia</taxon>
    </lineage>
</organism>
<gene>
    <name type="primary">gnd</name>
    <name type="ordered locus">CPn_0360</name>
    <name type="ordered locus">CP_0398</name>
    <name type="ordered locus">CpB0369</name>
</gene>
<proteinExistence type="inferred from homology"/>
<comment type="function">
    <text evidence="1">Catalyzes the oxidative decarboxylation of 6-phosphogluconate to ribulose 5-phosphate and CO(2), with concomitant reduction of NADP to NADPH.</text>
</comment>
<comment type="catalytic activity">
    <reaction>
        <text>6-phospho-D-gluconate + NADP(+) = D-ribulose 5-phosphate + CO2 + NADPH</text>
        <dbReference type="Rhea" id="RHEA:10116"/>
        <dbReference type="ChEBI" id="CHEBI:16526"/>
        <dbReference type="ChEBI" id="CHEBI:57783"/>
        <dbReference type="ChEBI" id="CHEBI:58121"/>
        <dbReference type="ChEBI" id="CHEBI:58349"/>
        <dbReference type="ChEBI" id="CHEBI:58759"/>
        <dbReference type="EC" id="1.1.1.44"/>
    </reaction>
</comment>
<comment type="pathway">
    <text>Carbohydrate degradation; pentose phosphate pathway; D-ribulose 5-phosphate from D-glucose 6-phosphate (oxidative stage): step 3/3.</text>
</comment>
<comment type="subunit">
    <text evidence="1">Homodimer.</text>
</comment>
<comment type="similarity">
    <text evidence="2">Belongs to the 6-phosphogluconate dehydrogenase family.</text>
</comment>
<name>6PGD_CHLPN</name>
<protein>
    <recommendedName>
        <fullName>6-phosphogluconate dehydrogenase, decarboxylating</fullName>
        <ecNumber>1.1.1.44</ecNumber>
    </recommendedName>
</protein>
<feature type="chain" id="PRO_0000090032" description="6-phosphogluconate dehydrogenase, decarboxylating">
    <location>
        <begin position="1"/>
        <end position="479"/>
    </location>
</feature>
<feature type="active site" description="Proton acceptor" evidence="1">
    <location>
        <position position="182"/>
    </location>
</feature>
<feature type="active site" description="Proton donor" evidence="1">
    <location>
        <position position="189"/>
    </location>
</feature>
<feature type="binding site" evidence="1">
    <location>
        <begin position="9"/>
        <end position="14"/>
    </location>
    <ligand>
        <name>NADP(+)</name>
        <dbReference type="ChEBI" id="CHEBI:58349"/>
    </ligand>
</feature>
<feature type="binding site" evidence="1">
    <location>
        <begin position="32"/>
        <end position="34"/>
    </location>
    <ligand>
        <name>NADP(+)</name>
        <dbReference type="ChEBI" id="CHEBI:58349"/>
    </ligand>
</feature>
<feature type="binding site" evidence="1">
    <location>
        <begin position="74"/>
        <end position="76"/>
    </location>
    <ligand>
        <name>NADP(+)</name>
        <dbReference type="ChEBI" id="CHEBI:58349"/>
    </ligand>
</feature>
<feature type="binding site" evidence="1">
    <location>
        <position position="102"/>
    </location>
    <ligand>
        <name>NADP(+)</name>
        <dbReference type="ChEBI" id="CHEBI:58349"/>
    </ligand>
</feature>
<feature type="binding site" description="in other chain" evidence="1">
    <location>
        <position position="102"/>
    </location>
    <ligand>
        <name>substrate</name>
        <note>ligand shared between dimeric partners</note>
    </ligand>
</feature>
<feature type="binding site" description="in other chain" evidence="1">
    <location>
        <begin position="128"/>
        <end position="130"/>
    </location>
    <ligand>
        <name>substrate</name>
        <note>ligand shared between dimeric partners</note>
    </ligand>
</feature>
<feature type="binding site" description="in other chain" evidence="1">
    <location>
        <begin position="185"/>
        <end position="186"/>
    </location>
    <ligand>
        <name>substrate</name>
        <note>ligand shared between dimeric partners</note>
    </ligand>
</feature>
<feature type="binding site" description="in other chain" evidence="1">
    <location>
        <position position="190"/>
    </location>
    <ligand>
        <name>substrate</name>
        <note>ligand shared between dimeric partners</note>
    </ligand>
</feature>
<feature type="binding site" description="in other chain" evidence="1">
    <location>
        <position position="259"/>
    </location>
    <ligand>
        <name>substrate</name>
        <note>ligand shared between dimeric partners</note>
    </ligand>
</feature>
<feature type="binding site" description="in other chain" evidence="1">
    <location>
        <position position="286"/>
    </location>
    <ligand>
        <name>substrate</name>
        <note>ligand shared between dimeric partners</note>
    </ligand>
</feature>
<feature type="binding site" evidence="1">
    <location>
        <position position="446"/>
    </location>
    <ligand>
        <name>substrate</name>
        <note>ligand shared between dimeric partners</note>
    </ligand>
</feature>
<feature type="binding site" evidence="1">
    <location>
        <position position="452"/>
    </location>
    <ligand>
        <name>substrate</name>
        <note>ligand shared between dimeric partners</note>
    </ligand>
</feature>